<name>RIMK1_SHEB8</name>
<proteinExistence type="inferred from homology"/>
<dbReference type="EC" id="6.3.2.-" evidence="1"/>
<dbReference type="EMBL" id="CP000753">
    <property type="protein sequence ID" value="ABS08518.1"/>
    <property type="molecule type" value="Genomic_DNA"/>
</dbReference>
<dbReference type="SMR" id="A6WNX9"/>
<dbReference type="KEGG" id="sbm:Shew185_2380"/>
<dbReference type="HOGENOM" id="CLU_054353_0_1_6"/>
<dbReference type="GO" id="GO:0005737">
    <property type="term" value="C:cytoplasm"/>
    <property type="evidence" value="ECO:0007669"/>
    <property type="project" value="TreeGrafter"/>
</dbReference>
<dbReference type="GO" id="GO:0005524">
    <property type="term" value="F:ATP binding"/>
    <property type="evidence" value="ECO:0007669"/>
    <property type="project" value="UniProtKB-UniRule"/>
</dbReference>
<dbReference type="GO" id="GO:0046872">
    <property type="term" value="F:metal ion binding"/>
    <property type="evidence" value="ECO:0007669"/>
    <property type="project" value="UniProtKB-KW"/>
</dbReference>
<dbReference type="GO" id="GO:0018169">
    <property type="term" value="F:ribosomal S6-glutamic acid ligase activity"/>
    <property type="evidence" value="ECO:0007669"/>
    <property type="project" value="TreeGrafter"/>
</dbReference>
<dbReference type="GO" id="GO:0036211">
    <property type="term" value="P:protein modification process"/>
    <property type="evidence" value="ECO:0007669"/>
    <property type="project" value="InterPro"/>
</dbReference>
<dbReference type="GO" id="GO:0009432">
    <property type="term" value="P:SOS response"/>
    <property type="evidence" value="ECO:0007669"/>
    <property type="project" value="TreeGrafter"/>
</dbReference>
<dbReference type="GO" id="GO:0006412">
    <property type="term" value="P:translation"/>
    <property type="evidence" value="ECO:0007669"/>
    <property type="project" value="UniProtKB-KW"/>
</dbReference>
<dbReference type="FunFam" id="3.40.50.20:FF:000004">
    <property type="entry name" value="Probable alpha-L-glutamate ligase"/>
    <property type="match status" value="1"/>
</dbReference>
<dbReference type="FunFam" id="3.30.1490.20:FF:000005">
    <property type="entry name" value="Probable alpha-L-glutamate ligase 1"/>
    <property type="match status" value="1"/>
</dbReference>
<dbReference type="FunFam" id="3.30.470.20:FF:000016">
    <property type="entry name" value="Ribosomal protein S6--L-glutamate ligase"/>
    <property type="match status" value="1"/>
</dbReference>
<dbReference type="Gene3D" id="3.40.50.20">
    <property type="match status" value="1"/>
</dbReference>
<dbReference type="Gene3D" id="3.30.1490.20">
    <property type="entry name" value="ATP-grasp fold, A domain"/>
    <property type="match status" value="1"/>
</dbReference>
<dbReference type="Gene3D" id="3.30.470.20">
    <property type="entry name" value="ATP-grasp fold, B domain"/>
    <property type="match status" value="1"/>
</dbReference>
<dbReference type="HAMAP" id="MF_01552">
    <property type="entry name" value="RimK"/>
    <property type="match status" value="1"/>
</dbReference>
<dbReference type="InterPro" id="IPR011761">
    <property type="entry name" value="ATP-grasp"/>
</dbReference>
<dbReference type="InterPro" id="IPR013651">
    <property type="entry name" value="ATP-grasp_RimK-type"/>
</dbReference>
<dbReference type="InterPro" id="IPR013815">
    <property type="entry name" value="ATP_grasp_subdomain_1"/>
</dbReference>
<dbReference type="InterPro" id="IPR023533">
    <property type="entry name" value="RimK"/>
</dbReference>
<dbReference type="InterPro" id="IPR041107">
    <property type="entry name" value="Rimk_N"/>
</dbReference>
<dbReference type="InterPro" id="IPR004666">
    <property type="entry name" value="Rp_bS6_RimK/Lys_biosynth_LsyX"/>
</dbReference>
<dbReference type="NCBIfam" id="NF007764">
    <property type="entry name" value="PRK10446.1"/>
    <property type="match status" value="1"/>
</dbReference>
<dbReference type="NCBIfam" id="TIGR00768">
    <property type="entry name" value="rimK_fam"/>
    <property type="match status" value="1"/>
</dbReference>
<dbReference type="PANTHER" id="PTHR21621:SF7">
    <property type="entry name" value="RIBOSOMAL PROTEIN BS6--L-GLUTAMATE LIGASE"/>
    <property type="match status" value="1"/>
</dbReference>
<dbReference type="PANTHER" id="PTHR21621">
    <property type="entry name" value="RIBOSOMAL PROTEIN S6 MODIFICATION PROTEIN"/>
    <property type="match status" value="1"/>
</dbReference>
<dbReference type="Pfam" id="PF08443">
    <property type="entry name" value="RimK"/>
    <property type="match status" value="1"/>
</dbReference>
<dbReference type="Pfam" id="PF18030">
    <property type="entry name" value="Rimk_N"/>
    <property type="match status" value="1"/>
</dbReference>
<dbReference type="SUPFAM" id="SSF56059">
    <property type="entry name" value="Glutathione synthetase ATP-binding domain-like"/>
    <property type="match status" value="1"/>
</dbReference>
<dbReference type="PROSITE" id="PS50975">
    <property type="entry name" value="ATP_GRASP"/>
    <property type="match status" value="1"/>
</dbReference>
<keyword id="KW-0067">ATP-binding</keyword>
<keyword id="KW-0436">Ligase</keyword>
<keyword id="KW-0460">Magnesium</keyword>
<keyword id="KW-0464">Manganese</keyword>
<keyword id="KW-0479">Metal-binding</keyword>
<keyword id="KW-0547">Nucleotide-binding</keyword>
<keyword id="KW-0648">Protein biosynthesis</keyword>
<gene>
    <name evidence="1" type="primary">rimK1</name>
    <name type="ordered locus">Shew185_2380</name>
</gene>
<sequence>MRIAILSQGPELYSTKRLVEAAQLRGHEVHVINPLECYMNINMRQSSIHIGGRELPAFDAVIPRIGASITFYGSAVLRQFEMMGVYALNDSVGISRSRDKLRSMQLMSRRGIGLPITGFANKPSDIPDLIDMVGGAPLVIKLLEGTQGIGVVLAETRKAAESVIEAFMGLKANIMVQEYIKEANGADIRCFVLGDKVIAAMKRQAMPGEFRSNLHRGGTASLVKLTPEERSVAIRAAKTMGLNVAGVDLLRSNHGPVIMEVNSSPGLEGIEGATTKDVAGAIIDFVEKNAIKVKKVTQAQG</sequence>
<feature type="chain" id="PRO_0000340550" description="Probable alpha-L-glutamate ligase 1">
    <location>
        <begin position="1"/>
        <end position="301"/>
    </location>
</feature>
<feature type="domain" description="ATP-grasp" evidence="1">
    <location>
        <begin position="104"/>
        <end position="287"/>
    </location>
</feature>
<feature type="binding site" evidence="1">
    <location>
        <position position="141"/>
    </location>
    <ligand>
        <name>ATP</name>
        <dbReference type="ChEBI" id="CHEBI:30616"/>
    </ligand>
</feature>
<feature type="binding site" evidence="1">
    <location>
        <begin position="178"/>
        <end position="179"/>
    </location>
    <ligand>
        <name>ATP</name>
        <dbReference type="ChEBI" id="CHEBI:30616"/>
    </ligand>
</feature>
<feature type="binding site" evidence="1">
    <location>
        <position position="187"/>
    </location>
    <ligand>
        <name>ATP</name>
        <dbReference type="ChEBI" id="CHEBI:30616"/>
    </ligand>
</feature>
<feature type="binding site" evidence="1">
    <location>
        <begin position="211"/>
        <end position="213"/>
    </location>
    <ligand>
        <name>ATP</name>
        <dbReference type="ChEBI" id="CHEBI:30616"/>
    </ligand>
</feature>
<feature type="binding site" evidence="1">
    <location>
        <position position="248"/>
    </location>
    <ligand>
        <name>Mg(2+)</name>
        <dbReference type="ChEBI" id="CHEBI:18420"/>
        <label>1</label>
    </ligand>
</feature>
<feature type="binding site" evidence="1">
    <location>
        <position position="248"/>
    </location>
    <ligand>
        <name>Mn(2+)</name>
        <dbReference type="ChEBI" id="CHEBI:29035"/>
        <label>1</label>
    </ligand>
</feature>
<feature type="binding site" evidence="1">
    <location>
        <position position="260"/>
    </location>
    <ligand>
        <name>Mg(2+)</name>
        <dbReference type="ChEBI" id="CHEBI:18420"/>
        <label>1</label>
    </ligand>
</feature>
<feature type="binding site" evidence="1">
    <location>
        <position position="260"/>
    </location>
    <ligand>
        <name>Mg(2+)</name>
        <dbReference type="ChEBI" id="CHEBI:18420"/>
        <label>2</label>
    </ligand>
</feature>
<feature type="binding site" evidence="1">
    <location>
        <position position="260"/>
    </location>
    <ligand>
        <name>Mn(2+)</name>
        <dbReference type="ChEBI" id="CHEBI:29035"/>
        <label>1</label>
    </ligand>
</feature>
<feature type="binding site" evidence="1">
    <location>
        <position position="260"/>
    </location>
    <ligand>
        <name>Mn(2+)</name>
        <dbReference type="ChEBI" id="CHEBI:29035"/>
        <label>2</label>
    </ligand>
</feature>
<feature type="binding site" evidence="1">
    <location>
        <position position="262"/>
    </location>
    <ligand>
        <name>Mg(2+)</name>
        <dbReference type="ChEBI" id="CHEBI:18420"/>
        <label>2</label>
    </ligand>
</feature>
<feature type="binding site" evidence="1">
    <location>
        <position position="262"/>
    </location>
    <ligand>
        <name>Mn(2+)</name>
        <dbReference type="ChEBI" id="CHEBI:29035"/>
        <label>2</label>
    </ligand>
</feature>
<protein>
    <recommendedName>
        <fullName evidence="1">Probable alpha-L-glutamate ligase 1</fullName>
        <ecNumber evidence="1">6.3.2.-</ecNumber>
    </recommendedName>
</protein>
<organism>
    <name type="scientific">Shewanella baltica (strain OS185)</name>
    <dbReference type="NCBI Taxonomy" id="402882"/>
    <lineage>
        <taxon>Bacteria</taxon>
        <taxon>Pseudomonadati</taxon>
        <taxon>Pseudomonadota</taxon>
        <taxon>Gammaproteobacteria</taxon>
        <taxon>Alteromonadales</taxon>
        <taxon>Shewanellaceae</taxon>
        <taxon>Shewanella</taxon>
    </lineage>
</organism>
<evidence type="ECO:0000255" key="1">
    <source>
        <dbReference type="HAMAP-Rule" id="MF_01552"/>
    </source>
</evidence>
<accession>A6WNX9</accession>
<comment type="cofactor">
    <cofactor evidence="1">
        <name>Mg(2+)</name>
        <dbReference type="ChEBI" id="CHEBI:18420"/>
    </cofactor>
    <cofactor evidence="1">
        <name>Mn(2+)</name>
        <dbReference type="ChEBI" id="CHEBI:29035"/>
    </cofactor>
    <text evidence="1">Binds 2 magnesium or manganese ions per subunit.</text>
</comment>
<comment type="similarity">
    <text evidence="1">Belongs to the RimK family.</text>
</comment>
<reference key="1">
    <citation type="submission" date="2007-07" db="EMBL/GenBank/DDBJ databases">
        <title>Complete sequence of chromosome of Shewanella baltica OS185.</title>
        <authorList>
            <consortium name="US DOE Joint Genome Institute"/>
            <person name="Copeland A."/>
            <person name="Lucas S."/>
            <person name="Lapidus A."/>
            <person name="Barry K."/>
            <person name="Glavina del Rio T."/>
            <person name="Dalin E."/>
            <person name="Tice H."/>
            <person name="Pitluck S."/>
            <person name="Sims D."/>
            <person name="Brettin T."/>
            <person name="Bruce D."/>
            <person name="Detter J.C."/>
            <person name="Han C."/>
            <person name="Schmutz J."/>
            <person name="Larimer F."/>
            <person name="Land M."/>
            <person name="Hauser L."/>
            <person name="Kyrpides N."/>
            <person name="Mikhailova N."/>
            <person name="Brettar I."/>
            <person name="Rodrigues J."/>
            <person name="Konstantinidis K."/>
            <person name="Tiedje J."/>
            <person name="Richardson P."/>
        </authorList>
    </citation>
    <scope>NUCLEOTIDE SEQUENCE [LARGE SCALE GENOMIC DNA]</scope>
    <source>
        <strain>OS185</strain>
    </source>
</reference>